<feature type="chain" id="PRO_1000017218" description="5-methyltetrahydropteroyltriglutamate--homocysteine methyltransferase">
    <location>
        <begin position="1"/>
        <end position="773"/>
    </location>
</feature>
<feature type="active site" description="Proton donor" evidence="1">
    <location>
        <position position="700"/>
    </location>
</feature>
<feature type="binding site" evidence="1">
    <location>
        <begin position="16"/>
        <end position="19"/>
    </location>
    <ligand>
        <name>5-methyltetrahydropteroyltri-L-glutamate</name>
        <dbReference type="ChEBI" id="CHEBI:58207"/>
    </ligand>
</feature>
<feature type="binding site" evidence="1">
    <location>
        <position position="116"/>
    </location>
    <ligand>
        <name>5-methyltetrahydropteroyltri-L-glutamate</name>
        <dbReference type="ChEBI" id="CHEBI:58207"/>
    </ligand>
</feature>
<feature type="binding site" evidence="1">
    <location>
        <begin position="437"/>
        <end position="439"/>
    </location>
    <ligand>
        <name>L-homocysteine</name>
        <dbReference type="ChEBI" id="CHEBI:58199"/>
    </ligand>
</feature>
<feature type="binding site" evidence="1">
    <location>
        <begin position="437"/>
        <end position="439"/>
    </location>
    <ligand>
        <name>L-methionine</name>
        <dbReference type="ChEBI" id="CHEBI:57844"/>
    </ligand>
</feature>
<feature type="binding site" evidence="1">
    <location>
        <position position="490"/>
    </location>
    <ligand>
        <name>L-homocysteine</name>
        <dbReference type="ChEBI" id="CHEBI:58199"/>
    </ligand>
</feature>
<feature type="binding site" evidence="1">
    <location>
        <position position="490"/>
    </location>
    <ligand>
        <name>L-methionine</name>
        <dbReference type="ChEBI" id="CHEBI:57844"/>
    </ligand>
</feature>
<feature type="binding site" evidence="1">
    <location>
        <begin position="521"/>
        <end position="522"/>
    </location>
    <ligand>
        <name>5-methyltetrahydropteroyltri-L-glutamate</name>
        <dbReference type="ChEBI" id="CHEBI:58207"/>
    </ligand>
</feature>
<feature type="binding site" evidence="1">
    <location>
        <position position="567"/>
    </location>
    <ligand>
        <name>5-methyltetrahydropteroyltri-L-glutamate</name>
        <dbReference type="ChEBI" id="CHEBI:58207"/>
    </ligand>
</feature>
<feature type="binding site" evidence="1">
    <location>
        <position position="605"/>
    </location>
    <ligand>
        <name>L-homocysteine</name>
        <dbReference type="ChEBI" id="CHEBI:58199"/>
    </ligand>
</feature>
<feature type="binding site" evidence="1">
    <location>
        <position position="605"/>
    </location>
    <ligand>
        <name>L-methionine</name>
        <dbReference type="ChEBI" id="CHEBI:57844"/>
    </ligand>
</feature>
<feature type="binding site" evidence="1">
    <location>
        <position position="611"/>
    </location>
    <ligand>
        <name>5-methyltetrahydropteroyltri-L-glutamate</name>
        <dbReference type="ChEBI" id="CHEBI:58207"/>
    </ligand>
</feature>
<feature type="binding site" evidence="1">
    <location>
        <position position="647"/>
    </location>
    <ligand>
        <name>Zn(2+)</name>
        <dbReference type="ChEBI" id="CHEBI:29105"/>
        <note>catalytic</note>
    </ligand>
</feature>
<feature type="binding site" evidence="1">
    <location>
        <position position="649"/>
    </location>
    <ligand>
        <name>Zn(2+)</name>
        <dbReference type="ChEBI" id="CHEBI:29105"/>
        <note>catalytic</note>
    </ligand>
</feature>
<feature type="binding site" evidence="1">
    <location>
        <position position="671"/>
    </location>
    <ligand>
        <name>Zn(2+)</name>
        <dbReference type="ChEBI" id="CHEBI:29105"/>
        <note>catalytic</note>
    </ligand>
</feature>
<feature type="binding site" evidence="1">
    <location>
        <position position="732"/>
    </location>
    <ligand>
        <name>Zn(2+)</name>
        <dbReference type="ChEBI" id="CHEBI:29105"/>
        <note>catalytic</note>
    </ligand>
</feature>
<evidence type="ECO:0000255" key="1">
    <source>
        <dbReference type="HAMAP-Rule" id="MF_00172"/>
    </source>
</evidence>
<proteinExistence type="inferred from homology"/>
<dbReference type="EC" id="2.1.1.14" evidence="1"/>
<dbReference type="EMBL" id="CP000453">
    <property type="protein sequence ID" value="ABI57447.1"/>
    <property type="molecule type" value="Genomic_DNA"/>
</dbReference>
<dbReference type="RefSeq" id="WP_011629841.1">
    <property type="nucleotide sequence ID" value="NC_008340.1"/>
</dbReference>
<dbReference type="SMR" id="Q0A6U0"/>
<dbReference type="KEGG" id="aeh:Mlg_2105"/>
<dbReference type="eggNOG" id="COG0620">
    <property type="taxonomic scope" value="Bacteria"/>
</dbReference>
<dbReference type="HOGENOM" id="CLU_013175_0_0_6"/>
<dbReference type="OrthoDB" id="244285at2"/>
<dbReference type="UniPathway" id="UPA00051">
    <property type="reaction ID" value="UER00082"/>
</dbReference>
<dbReference type="Proteomes" id="UP000001962">
    <property type="component" value="Chromosome"/>
</dbReference>
<dbReference type="GO" id="GO:0003871">
    <property type="term" value="F:5-methyltetrahydropteroyltriglutamate-homocysteine S-methyltransferase activity"/>
    <property type="evidence" value="ECO:0007669"/>
    <property type="project" value="UniProtKB-UniRule"/>
</dbReference>
<dbReference type="GO" id="GO:0008270">
    <property type="term" value="F:zinc ion binding"/>
    <property type="evidence" value="ECO:0007669"/>
    <property type="project" value="InterPro"/>
</dbReference>
<dbReference type="GO" id="GO:0009086">
    <property type="term" value="P:methionine biosynthetic process"/>
    <property type="evidence" value="ECO:0007669"/>
    <property type="project" value="UniProtKB-UniRule"/>
</dbReference>
<dbReference type="GO" id="GO:0032259">
    <property type="term" value="P:methylation"/>
    <property type="evidence" value="ECO:0007669"/>
    <property type="project" value="UniProtKB-KW"/>
</dbReference>
<dbReference type="CDD" id="cd03311">
    <property type="entry name" value="CIMS_C_terminal_like"/>
    <property type="match status" value="1"/>
</dbReference>
<dbReference type="CDD" id="cd03312">
    <property type="entry name" value="CIMS_N_terminal_like"/>
    <property type="match status" value="1"/>
</dbReference>
<dbReference type="FunFam" id="3.20.20.210:FF:000002">
    <property type="entry name" value="5-methyltetrahydropteroyltriglutamate--homocysteine methyltransferase"/>
    <property type="match status" value="1"/>
</dbReference>
<dbReference type="FunFam" id="3.20.20.210:FF:000003">
    <property type="entry name" value="5-methyltetrahydropteroyltriglutamate--homocysteine methyltransferase"/>
    <property type="match status" value="1"/>
</dbReference>
<dbReference type="Gene3D" id="3.20.20.210">
    <property type="match status" value="2"/>
</dbReference>
<dbReference type="HAMAP" id="MF_00172">
    <property type="entry name" value="Meth_synth"/>
    <property type="match status" value="1"/>
</dbReference>
<dbReference type="InterPro" id="IPR013215">
    <property type="entry name" value="Cbl-indep_Met_Synth_N"/>
</dbReference>
<dbReference type="InterPro" id="IPR006276">
    <property type="entry name" value="Cobalamin-indep_Met_synthase"/>
</dbReference>
<dbReference type="InterPro" id="IPR002629">
    <property type="entry name" value="Met_Synth_C/arc"/>
</dbReference>
<dbReference type="InterPro" id="IPR038071">
    <property type="entry name" value="UROD/MetE-like_sf"/>
</dbReference>
<dbReference type="NCBIfam" id="TIGR01371">
    <property type="entry name" value="met_syn_B12ind"/>
    <property type="match status" value="1"/>
</dbReference>
<dbReference type="NCBIfam" id="NF003556">
    <property type="entry name" value="PRK05222.1"/>
    <property type="match status" value="1"/>
</dbReference>
<dbReference type="PANTHER" id="PTHR30519">
    <property type="entry name" value="5-METHYLTETRAHYDROPTEROYLTRIGLUTAMATE--HOMOCYSTEINE METHYLTRANSFERASE"/>
    <property type="match status" value="1"/>
</dbReference>
<dbReference type="Pfam" id="PF08267">
    <property type="entry name" value="Meth_synt_1"/>
    <property type="match status" value="1"/>
</dbReference>
<dbReference type="Pfam" id="PF01717">
    <property type="entry name" value="Meth_synt_2"/>
    <property type="match status" value="1"/>
</dbReference>
<dbReference type="PIRSF" id="PIRSF000382">
    <property type="entry name" value="MeTrfase_B12_ind"/>
    <property type="match status" value="1"/>
</dbReference>
<dbReference type="SUPFAM" id="SSF51726">
    <property type="entry name" value="UROD/MetE-like"/>
    <property type="match status" value="2"/>
</dbReference>
<accession>Q0A6U0</accession>
<comment type="function">
    <text evidence="1">Catalyzes the transfer of a methyl group from 5-methyltetrahydrofolate to homocysteine resulting in methionine formation.</text>
</comment>
<comment type="catalytic activity">
    <reaction evidence="1">
        <text>5-methyltetrahydropteroyltri-L-glutamate + L-homocysteine = tetrahydropteroyltri-L-glutamate + L-methionine</text>
        <dbReference type="Rhea" id="RHEA:21196"/>
        <dbReference type="ChEBI" id="CHEBI:57844"/>
        <dbReference type="ChEBI" id="CHEBI:58140"/>
        <dbReference type="ChEBI" id="CHEBI:58199"/>
        <dbReference type="ChEBI" id="CHEBI:58207"/>
        <dbReference type="EC" id="2.1.1.14"/>
    </reaction>
</comment>
<comment type="cofactor">
    <cofactor evidence="1">
        <name>Zn(2+)</name>
        <dbReference type="ChEBI" id="CHEBI:29105"/>
    </cofactor>
    <text evidence="1">Binds 1 zinc ion per subunit.</text>
</comment>
<comment type="pathway">
    <text evidence="1">Amino-acid biosynthesis; L-methionine biosynthesis via de novo pathway; L-methionine from L-homocysteine (MetE route): step 1/1.</text>
</comment>
<comment type="similarity">
    <text evidence="1">Belongs to the vitamin-B12 independent methionine synthase family.</text>
</comment>
<name>METE_ALKEH</name>
<reference key="1">
    <citation type="submission" date="2006-08" db="EMBL/GenBank/DDBJ databases">
        <title>Complete sequence of Alkalilimnicola ehrilichei MLHE-1.</title>
        <authorList>
            <person name="Copeland A."/>
            <person name="Lucas S."/>
            <person name="Lapidus A."/>
            <person name="Barry K."/>
            <person name="Detter J.C."/>
            <person name="Glavina del Rio T."/>
            <person name="Hammon N."/>
            <person name="Israni S."/>
            <person name="Dalin E."/>
            <person name="Tice H."/>
            <person name="Pitluck S."/>
            <person name="Sims D."/>
            <person name="Brettin T."/>
            <person name="Bruce D."/>
            <person name="Han C."/>
            <person name="Tapia R."/>
            <person name="Gilna P."/>
            <person name="Schmutz J."/>
            <person name="Larimer F."/>
            <person name="Land M."/>
            <person name="Hauser L."/>
            <person name="Kyrpides N."/>
            <person name="Mikhailova N."/>
            <person name="Oremland R.S."/>
            <person name="Hoeft S.E."/>
            <person name="Switzer-Blum J."/>
            <person name="Kulp T."/>
            <person name="King G."/>
            <person name="Tabita R."/>
            <person name="Witte B."/>
            <person name="Santini J.M."/>
            <person name="Basu P."/>
            <person name="Hollibaugh J.T."/>
            <person name="Xie G."/>
            <person name="Stolz J.F."/>
            <person name="Richardson P."/>
        </authorList>
    </citation>
    <scope>NUCLEOTIDE SEQUENCE [LARGE SCALE GENOMIC DNA]</scope>
    <source>
        <strain>ATCC BAA-1101 / DSM 17681 / MLHE-1</strain>
    </source>
</reference>
<gene>
    <name evidence="1" type="primary">metE</name>
    <name type="ordered locus">Mlg_2105</name>
</gene>
<protein>
    <recommendedName>
        <fullName evidence="1">5-methyltetrahydropteroyltriglutamate--homocysteine methyltransferase</fullName>
        <ecNumber evidence="1">2.1.1.14</ecNumber>
    </recommendedName>
    <alternativeName>
        <fullName evidence="1">Cobalamin-independent methionine synthase</fullName>
    </alternativeName>
    <alternativeName>
        <fullName evidence="1">Methionine synthase, vitamin-B12 independent isozyme</fullName>
    </alternativeName>
</protein>
<sequence length="773" mass="86615">MSTTHVLGYPRIGARRELKRATEAYWKGEIDQAELERTGRELRARHWQAQRDAGLDWVTVGDFAFYDHVLNVSALLGAVPPRFGDAGETVDLDTTFRMARGRAPTGEPAAACEMTKYFDTNYHYLVPELHADQRFGLASRRLFDEVAEARAAGHPVKVVLTGPLTWLWLGKAKSPGLDRLDLLDGVVDVYGEILQQLGEQGVEWVQLDEPALVQDLPADWQQAYERAYHRLQAGPVKLLLATYFGGLGENLSTALNLPVDGIHIDCVRDPDQLTAVLDRLLPHKVLSLGVIDGRNVWRSDLAALARTLAPVRERLGERLWLAPSCSLLHVPVDLDLETELQPQLRRWLAFARQKLDELVVLGRLLGDRAGAADEQAAAEASAALADRQASTHIHKAEVAERMQRVGPADRQRGQPYPERARKQRKRLALPLFPTTTIGSFPQTAEIRAARRDLKAGRLTPEAYEARMREEIAFAVARQEEIGLDVLVHGEAERNDMVEYFGEQLDGFAFTRAGWVQSYGSRCVKPPIIYGDVSRPRPMTVRWSEYAQSLTGRPMKGMLTGPVTVLQWSFVRDDQPRSETCRQIALALRDEVADLEAAGIPAIQIDEPALREGLPLQQRQWPGYLDWAVDCFRLTASVAQDATQIHTHMCYSEFNDIMGAIATLDADVITIETSRSDMELLEVFEGFEYPNEIGPGVYDIHSPNTPSVDWMVRLMEKAARRIPVERLWVNPDCGLKTRAWAEVEPALQNMVAAAEILRERYGQAQTRVATQGKR</sequence>
<keyword id="KW-0028">Amino-acid biosynthesis</keyword>
<keyword id="KW-0479">Metal-binding</keyword>
<keyword id="KW-0486">Methionine biosynthesis</keyword>
<keyword id="KW-0489">Methyltransferase</keyword>
<keyword id="KW-1185">Reference proteome</keyword>
<keyword id="KW-0677">Repeat</keyword>
<keyword id="KW-0808">Transferase</keyword>
<keyword id="KW-0862">Zinc</keyword>
<organism>
    <name type="scientific">Alkalilimnicola ehrlichii (strain ATCC BAA-1101 / DSM 17681 / MLHE-1)</name>
    <dbReference type="NCBI Taxonomy" id="187272"/>
    <lineage>
        <taxon>Bacteria</taxon>
        <taxon>Pseudomonadati</taxon>
        <taxon>Pseudomonadota</taxon>
        <taxon>Gammaproteobacteria</taxon>
        <taxon>Chromatiales</taxon>
        <taxon>Ectothiorhodospiraceae</taxon>
        <taxon>Alkalilimnicola</taxon>
    </lineage>
</organism>